<keyword id="KW-0883">Thioether bond</keyword>
<keyword id="KW-0800">Toxin</keyword>
<comment type="function">
    <text evidence="7">Toxin belonging to the bicyclic octapeptides amatoxins that acts by binding non-competitively to RNA polymerase II and greatly slowing the elongation of transcripts from target promoters (PubMed:18025465).</text>
</comment>
<comment type="PTM">
    <text evidence="1 7">Processed by the macrocyclase-peptidase enzyme POPB to yield a toxic cyclic decapeptide (PubMed:18025465). POPB first removes 10 residues from the N-terminus (By similarity). Conformational trapping of the remaining peptide forces the enzyme to release this intermediate rather than proceed to macrocyclization (By similarity). The enzyme rebinds the remaining peptide in a different conformation and catalyzes macrocyclization of the N-terminal 8 residues (By similarity).</text>
</comment>
<comment type="miscellaneous">
    <text evidence="4">The typical symptoms of amatoxin poisoning are gastro-intestinal distress beginning 6-12 hours after ingestion, a remission phase lasting 12-24 hours, and progressive loss of liver function culminating in death within 3-5 days (PubMed:12475187). One of the few effective treatments is liver transplantation (PubMed:12475187).</text>
</comment>
<comment type="similarity">
    <text evidence="6">Belongs to the MSDIN fungal toxin family.</text>
</comment>
<sequence>MSDINATRLPIWGIGCDPCIGDDVTILLTRGE</sequence>
<feature type="propeptide" id="PRO_0000443590" evidence="2">
    <location>
        <begin position="1"/>
        <end position="10"/>
    </location>
</feature>
<feature type="peptide" id="PRO_0000443591" description="Beta-amanitin" evidence="2">
    <location>
        <begin position="11"/>
        <end position="18"/>
    </location>
</feature>
<feature type="propeptide" id="PRO_0000443592" evidence="2">
    <location>
        <begin position="19"/>
        <end position="32"/>
    </location>
</feature>
<feature type="cross-link" description="Cyclopeptide (Ile-Pro)" evidence="2">
    <location>
        <begin position="11"/>
        <end position="18"/>
    </location>
</feature>
<feature type="cross-link" description="2'-cysteinyl-6'-hydroxytryptophan sulfoxide (Trp-Cys)" evidence="3">
    <location>
        <begin position="12"/>
        <end position="16"/>
    </location>
</feature>
<feature type="non-terminal residue" evidence="6">
    <location>
        <position position="32"/>
    </location>
</feature>
<reference key="1">
    <citation type="journal article" date="2007" name="Proc. Natl. Acad. Sci. U.S.A.">
        <title>Gene family encoding the major toxins of lethal Amanita mushrooms.</title>
        <authorList>
            <person name="Hallen H.E."/>
            <person name="Luo H."/>
            <person name="Scott-Craig J.S."/>
            <person name="Walton J.D."/>
        </authorList>
    </citation>
    <scope>NUCLEOTIDE SEQUENCE [GENOMIC DNA]</scope>
    <scope>FUNCTION</scope>
</reference>
<reference key="2">
    <citation type="journal article" date="2002" name="J. Toxicol. Clin. Toxicol.">
        <title>Treatment of amatoxin poisoning: 20-year retrospective analysis.</title>
        <authorList>
            <person name="Enjalbert F."/>
            <person name="Rapior S."/>
            <person name="Nouguier-Soule J."/>
            <person name="Guillon S."/>
            <person name="Amouroux N."/>
            <person name="Cabot C."/>
        </authorList>
    </citation>
    <scope>REVIEW ON TOXICITY</scope>
</reference>
<name>BAMA2_AMAPH</name>
<accession>A8W7P1</accession>
<evidence type="ECO:0000250" key="1">
    <source>
        <dbReference type="UniProtKB" id="A0A067SLB9"/>
    </source>
</evidence>
<evidence type="ECO:0000250" key="2">
    <source>
        <dbReference type="UniProtKB" id="A8W7M4"/>
    </source>
</evidence>
<evidence type="ECO:0000250" key="3">
    <source>
        <dbReference type="UniProtKB" id="P85421"/>
    </source>
</evidence>
<evidence type="ECO:0000303" key="4">
    <source>
    </source>
</evidence>
<evidence type="ECO:0000303" key="5">
    <source>
    </source>
</evidence>
<evidence type="ECO:0000305" key="6"/>
<evidence type="ECO:0000305" key="7">
    <source>
    </source>
</evidence>
<protein>
    <recommendedName>
        <fullName evidence="5">Beta-amanitin proprotein</fullName>
    </recommendedName>
    <component>
        <recommendedName>
            <fullName evidence="5">Beta-amanitin</fullName>
        </recommendedName>
    </component>
</protein>
<organism>
    <name type="scientific">Amanita phalloides</name>
    <name type="common">Death cap</name>
    <dbReference type="NCBI Taxonomy" id="67723"/>
    <lineage>
        <taxon>Eukaryota</taxon>
        <taxon>Fungi</taxon>
        <taxon>Dikarya</taxon>
        <taxon>Basidiomycota</taxon>
        <taxon>Agaricomycotina</taxon>
        <taxon>Agaricomycetes</taxon>
        <taxon>Agaricomycetidae</taxon>
        <taxon>Agaricales</taxon>
        <taxon>Pluteineae</taxon>
        <taxon>Amanitaceae</taxon>
        <taxon>Amanita</taxon>
    </lineage>
</organism>
<proteinExistence type="inferred from homology"/>
<gene>
    <name evidence="5" type="primary">AMA2</name>
</gene>
<dbReference type="EMBL" id="EU196156">
    <property type="protein sequence ID" value="ABW87785.1"/>
    <property type="molecule type" value="Genomic_DNA"/>
</dbReference>
<dbReference type="GO" id="GO:0090729">
    <property type="term" value="F:toxin activity"/>
    <property type="evidence" value="ECO:0007669"/>
    <property type="project" value="UniProtKB-KW"/>
</dbReference>
<dbReference type="InterPro" id="IPR027582">
    <property type="entry name" value="Amanitin/phalloidin"/>
</dbReference>
<dbReference type="NCBIfam" id="TIGR04309">
    <property type="entry name" value="amanitin"/>
    <property type="match status" value="1"/>
</dbReference>
<dbReference type="Pfam" id="PF24112">
    <property type="entry name" value="Amanitin"/>
    <property type="match status" value="1"/>
</dbReference>